<sequence length="592" mass="66399">MNNGRIVRINGPLVVADNMKNAQMYEVVEVGEPRLIGEITRIEGDRAFIQVYEDTSGIKPNEPVYRTGAPLSIELGPGLIGKIFDGLQRPLDSIKELTKSPFIARGIKVPSVDRKTKWHFIPKVKKGDKIEGGDIIGIVNETPLVEHRILVPPYVHGTLKEIVAEGDYTVEDPIAVVDMNGDEVPIKLMQRWPVRIPRPFKEKLEPTEPLLTGTRVLDTIFPIAKGGTAAIPGPFGSGKTVTLQSLAKWSAAKIVIYVGCGERGNEMTDELRQFPSLKDPWTGRPLLERTILVANTSNMPVAAREASIYVGITMAEYFRDQGYDTLLVADSTSRWAEALRDLGGRMEEMPAEEGFPSYLPSRLAEYYERAGRVKTVGKPERFGSVTVASAVSPPGGDFTEPVTSQTLRFVKVFWPLDVSLAQARHYPAINWLQGFSAYVDLVANWWNTNVDPKWREMRDMMVRTLIREDELRQIVRLVGPESLAEKDKLVLETARLIKEAFLKQNAYDDIDAFSSPQKQARVMRLIYLFNTHASRLVERGIPTKKIVDSMGQLLPEIIRSKAAIKNDELNKYDELERKLISVFENLEKEAGT</sequence>
<name>AATA_SACI3</name>
<feature type="chain" id="PRO_1000205032" description="A-type ATP synthase subunit A">
    <location>
        <begin position="1"/>
        <end position="592"/>
    </location>
</feature>
<feature type="binding site" evidence="1">
    <location>
        <begin position="233"/>
        <end position="240"/>
    </location>
    <ligand>
        <name>ATP</name>
        <dbReference type="ChEBI" id="CHEBI:30616"/>
    </ligand>
</feature>
<gene>
    <name evidence="1" type="primary">atpA</name>
    <name type="ordered locus">M1627_1682</name>
</gene>
<dbReference type="EC" id="7.1.2.2" evidence="1"/>
<dbReference type="EMBL" id="CP001401">
    <property type="protein sequence ID" value="ACP55560.1"/>
    <property type="molecule type" value="Genomic_DNA"/>
</dbReference>
<dbReference type="RefSeq" id="WP_012711559.1">
    <property type="nucleotide sequence ID" value="NC_012632.1"/>
</dbReference>
<dbReference type="SMR" id="C3N6D5"/>
<dbReference type="KEGG" id="sim:M1627_1682"/>
<dbReference type="HOGENOM" id="CLU_008162_3_1_2"/>
<dbReference type="Proteomes" id="UP000002307">
    <property type="component" value="Chromosome"/>
</dbReference>
<dbReference type="GO" id="GO:0005886">
    <property type="term" value="C:plasma membrane"/>
    <property type="evidence" value="ECO:0007669"/>
    <property type="project" value="UniProtKB-SubCell"/>
</dbReference>
<dbReference type="GO" id="GO:0033178">
    <property type="term" value="C:proton-transporting two-sector ATPase complex, catalytic domain"/>
    <property type="evidence" value="ECO:0007669"/>
    <property type="project" value="InterPro"/>
</dbReference>
<dbReference type="GO" id="GO:0005524">
    <property type="term" value="F:ATP binding"/>
    <property type="evidence" value="ECO:0007669"/>
    <property type="project" value="UniProtKB-UniRule"/>
</dbReference>
<dbReference type="GO" id="GO:0016887">
    <property type="term" value="F:ATP hydrolysis activity"/>
    <property type="evidence" value="ECO:0007669"/>
    <property type="project" value="InterPro"/>
</dbReference>
<dbReference type="GO" id="GO:0046933">
    <property type="term" value="F:proton-transporting ATP synthase activity, rotational mechanism"/>
    <property type="evidence" value="ECO:0007669"/>
    <property type="project" value="UniProtKB-UniRule"/>
</dbReference>
<dbReference type="GO" id="GO:0046961">
    <property type="term" value="F:proton-transporting ATPase activity, rotational mechanism"/>
    <property type="evidence" value="ECO:0007669"/>
    <property type="project" value="InterPro"/>
</dbReference>
<dbReference type="GO" id="GO:0042777">
    <property type="term" value="P:proton motive force-driven plasma membrane ATP synthesis"/>
    <property type="evidence" value="ECO:0007669"/>
    <property type="project" value="UniProtKB-UniRule"/>
</dbReference>
<dbReference type="CDD" id="cd18111">
    <property type="entry name" value="ATP-synt_V_A-type_alpha_C"/>
    <property type="match status" value="1"/>
</dbReference>
<dbReference type="CDD" id="cd18119">
    <property type="entry name" value="ATP-synt_V_A-type_alpha_N"/>
    <property type="match status" value="1"/>
</dbReference>
<dbReference type="CDD" id="cd01134">
    <property type="entry name" value="V_A-ATPase_A"/>
    <property type="match status" value="1"/>
</dbReference>
<dbReference type="FunFam" id="1.10.1140.10:FF:000002">
    <property type="entry name" value="V-type proton ATPase catalytic subunit A"/>
    <property type="match status" value="1"/>
</dbReference>
<dbReference type="FunFam" id="2.40.30.20:FF:000002">
    <property type="entry name" value="V-type proton ATPase catalytic subunit A"/>
    <property type="match status" value="1"/>
</dbReference>
<dbReference type="FunFam" id="2.40.50.100:FF:000008">
    <property type="entry name" value="V-type proton ATPase catalytic subunit A"/>
    <property type="match status" value="1"/>
</dbReference>
<dbReference type="Gene3D" id="2.40.30.20">
    <property type="match status" value="1"/>
</dbReference>
<dbReference type="Gene3D" id="2.40.50.100">
    <property type="match status" value="1"/>
</dbReference>
<dbReference type="Gene3D" id="1.10.1140.10">
    <property type="entry name" value="Bovine Mitochondrial F1-atpase, Atp Synthase Beta Chain, Chain D, domain 3"/>
    <property type="match status" value="1"/>
</dbReference>
<dbReference type="Gene3D" id="3.40.50.300">
    <property type="entry name" value="P-loop containing nucleotide triphosphate hydrolases"/>
    <property type="match status" value="1"/>
</dbReference>
<dbReference type="HAMAP" id="MF_00309">
    <property type="entry name" value="ATP_synth_A_arch"/>
    <property type="match status" value="1"/>
</dbReference>
<dbReference type="InterPro" id="IPR003593">
    <property type="entry name" value="AAA+_ATPase"/>
</dbReference>
<dbReference type="InterPro" id="IPR055190">
    <property type="entry name" value="ATP-synt_VA_C"/>
</dbReference>
<dbReference type="InterPro" id="IPR031686">
    <property type="entry name" value="ATP-synth_a_Xtn"/>
</dbReference>
<dbReference type="InterPro" id="IPR023366">
    <property type="entry name" value="ATP_synth_asu-like_sf"/>
</dbReference>
<dbReference type="InterPro" id="IPR005726">
    <property type="entry name" value="ATP_synth_asu_arc"/>
</dbReference>
<dbReference type="InterPro" id="IPR004100">
    <property type="entry name" value="ATPase_F1/V1/A1_a/bsu_N"/>
</dbReference>
<dbReference type="InterPro" id="IPR036121">
    <property type="entry name" value="ATPase_F1/V1/A1_a/bsu_N_sf"/>
</dbReference>
<dbReference type="InterPro" id="IPR000194">
    <property type="entry name" value="ATPase_F1/V1/A1_a/bsu_nucl-bd"/>
</dbReference>
<dbReference type="InterPro" id="IPR024034">
    <property type="entry name" value="ATPase_F1/V1_b/a_C"/>
</dbReference>
<dbReference type="InterPro" id="IPR027417">
    <property type="entry name" value="P-loop_NTPase"/>
</dbReference>
<dbReference type="InterPro" id="IPR022878">
    <property type="entry name" value="V-ATPase_asu"/>
</dbReference>
<dbReference type="NCBIfam" id="TIGR01043">
    <property type="entry name" value="ATP_syn_A_arch"/>
    <property type="match status" value="1"/>
</dbReference>
<dbReference type="NCBIfam" id="NF003220">
    <property type="entry name" value="PRK04192.1"/>
    <property type="match status" value="1"/>
</dbReference>
<dbReference type="PANTHER" id="PTHR43607:SF1">
    <property type="entry name" value="H(+)-TRANSPORTING TWO-SECTOR ATPASE"/>
    <property type="match status" value="1"/>
</dbReference>
<dbReference type="PANTHER" id="PTHR43607">
    <property type="entry name" value="V-TYPE PROTON ATPASE CATALYTIC SUBUNIT A"/>
    <property type="match status" value="1"/>
</dbReference>
<dbReference type="Pfam" id="PF00006">
    <property type="entry name" value="ATP-synt_ab"/>
    <property type="match status" value="1"/>
</dbReference>
<dbReference type="Pfam" id="PF02874">
    <property type="entry name" value="ATP-synt_ab_N"/>
    <property type="match status" value="1"/>
</dbReference>
<dbReference type="Pfam" id="PF16886">
    <property type="entry name" value="ATP-synt_ab_Xtn"/>
    <property type="match status" value="1"/>
</dbReference>
<dbReference type="Pfam" id="PF22919">
    <property type="entry name" value="ATP-synt_VA_C"/>
    <property type="match status" value="1"/>
</dbReference>
<dbReference type="SMART" id="SM00382">
    <property type="entry name" value="AAA"/>
    <property type="match status" value="1"/>
</dbReference>
<dbReference type="SUPFAM" id="SSF47917">
    <property type="entry name" value="C-terminal domain of alpha and beta subunits of F1 ATP synthase"/>
    <property type="match status" value="1"/>
</dbReference>
<dbReference type="SUPFAM" id="SSF50615">
    <property type="entry name" value="N-terminal domain of alpha and beta subunits of F1 ATP synthase"/>
    <property type="match status" value="1"/>
</dbReference>
<dbReference type="SUPFAM" id="SSF52540">
    <property type="entry name" value="P-loop containing nucleoside triphosphate hydrolases"/>
    <property type="match status" value="1"/>
</dbReference>
<evidence type="ECO:0000255" key="1">
    <source>
        <dbReference type="HAMAP-Rule" id="MF_00309"/>
    </source>
</evidence>
<accession>C3N6D5</accession>
<reference key="1">
    <citation type="journal article" date="2009" name="Proc. Natl. Acad. Sci. U.S.A.">
        <title>Biogeography of the Sulfolobus islandicus pan-genome.</title>
        <authorList>
            <person name="Reno M.L."/>
            <person name="Held N.L."/>
            <person name="Fields C.J."/>
            <person name="Burke P.V."/>
            <person name="Whitaker R.J."/>
        </authorList>
    </citation>
    <scope>NUCLEOTIDE SEQUENCE [LARGE SCALE GENOMIC DNA]</scope>
    <source>
        <strain>M.16.27</strain>
    </source>
</reference>
<organism>
    <name type="scientific">Saccharolobus islandicus (strain M.16.27)</name>
    <name type="common">Sulfolobus islandicus</name>
    <dbReference type="NCBI Taxonomy" id="427318"/>
    <lineage>
        <taxon>Archaea</taxon>
        <taxon>Thermoproteota</taxon>
        <taxon>Thermoprotei</taxon>
        <taxon>Sulfolobales</taxon>
        <taxon>Sulfolobaceae</taxon>
        <taxon>Saccharolobus</taxon>
    </lineage>
</organism>
<keyword id="KW-0066">ATP synthesis</keyword>
<keyword id="KW-0067">ATP-binding</keyword>
<keyword id="KW-1003">Cell membrane</keyword>
<keyword id="KW-0375">Hydrogen ion transport</keyword>
<keyword id="KW-0406">Ion transport</keyword>
<keyword id="KW-0472">Membrane</keyword>
<keyword id="KW-0547">Nucleotide-binding</keyword>
<keyword id="KW-1278">Translocase</keyword>
<keyword id="KW-0813">Transport</keyword>
<comment type="function">
    <text evidence="1">Component of the A-type ATP synthase that produces ATP from ADP in the presence of a proton gradient across the membrane. The A chain is the catalytic subunit.</text>
</comment>
<comment type="catalytic activity">
    <reaction evidence="1">
        <text>ATP + H2O + 4 H(+)(in) = ADP + phosphate + 5 H(+)(out)</text>
        <dbReference type="Rhea" id="RHEA:57720"/>
        <dbReference type="ChEBI" id="CHEBI:15377"/>
        <dbReference type="ChEBI" id="CHEBI:15378"/>
        <dbReference type="ChEBI" id="CHEBI:30616"/>
        <dbReference type="ChEBI" id="CHEBI:43474"/>
        <dbReference type="ChEBI" id="CHEBI:456216"/>
        <dbReference type="EC" id="7.1.2.2"/>
    </reaction>
</comment>
<comment type="subunit">
    <text evidence="1">Has multiple subunits with at least A(3), B(3), C, D, E, F, H, I and proteolipid K(x).</text>
</comment>
<comment type="subcellular location">
    <subcellularLocation>
        <location evidence="1">Cell membrane</location>
        <topology evidence="1">Peripheral membrane protein</topology>
    </subcellularLocation>
</comment>
<comment type="similarity">
    <text evidence="1">Belongs to the ATPase alpha/beta chains family.</text>
</comment>
<protein>
    <recommendedName>
        <fullName evidence="1">A-type ATP synthase subunit A</fullName>
        <ecNumber evidence="1">7.1.2.2</ecNumber>
    </recommendedName>
</protein>
<proteinExistence type="inferred from homology"/>